<accession>A0A3A6N9T6</accession>
<name>SQWD_ACHSX</name>
<keyword id="KW-0119">Carbohydrate metabolism</keyword>
<keyword id="KW-0520">NAD</keyword>
<keyword id="KW-0560">Oxidoreductase</keyword>
<comment type="function">
    <text evidence="3">Part of a variant of the sulfo-TK pathway, a D-sulfoquinovose degradation pathway that produces sulfoacetate (PubMed:37404184). Catalyzes the oxidation of sulfoacetaldehyde (SA) to sulfoacetyl-coenzyme A (sulfoacetyl-CoA) (PubMed:37404184). Is highly specific for NAD(+), with only residual (1%) activity with NADP(+) (PubMed:37404184). Cannot use acetaldehyde (PubMed:37404184).</text>
</comment>
<comment type="catalytic activity">
    <reaction evidence="3">
        <text>sulfoacetaldehyde + NAD(+) + CoA = sulfoacetyl-CoA + NADH + H(+)</text>
        <dbReference type="Rhea" id="RHEA:76679"/>
        <dbReference type="ChEBI" id="CHEBI:15378"/>
        <dbReference type="ChEBI" id="CHEBI:57287"/>
        <dbReference type="ChEBI" id="CHEBI:57540"/>
        <dbReference type="ChEBI" id="CHEBI:57945"/>
        <dbReference type="ChEBI" id="CHEBI:58246"/>
        <dbReference type="ChEBI" id="CHEBI:61994"/>
    </reaction>
    <physiologicalReaction direction="left-to-right" evidence="3">
        <dbReference type="Rhea" id="RHEA:76680"/>
    </physiologicalReaction>
</comment>
<comment type="biophysicochemical properties">
    <kinetics>
        <KM evidence="3">0.26 mM for sulfoacetaldehyde</KM>
        <KM evidence="3">0.1 mM for CoA</KM>
        <KM evidence="3">1.06 mM for NAD(+)</KM>
        <text evidence="3">kcat is 43.5 sec(-1) with sulfoacetaldehyde as substrate. kcat is 44.3 sec(-1) with CoA as substrate. kcat is 42.8 sec(-1) with NAD(+) as substrate.</text>
    </kinetics>
    <phDependence>
        <text evidence="3">Optimum pH is 9.0.</text>
    </phDependence>
</comment>
<comment type="similarity">
    <text evidence="5">Belongs to the aldehyde dehydrogenase family.</text>
</comment>
<organism>
    <name type="scientific">Acholeplasma sp</name>
    <dbReference type="NCBI Taxonomy" id="33015"/>
    <lineage>
        <taxon>Bacteria</taxon>
        <taxon>Bacillati</taxon>
        <taxon>Mycoplasmatota</taxon>
        <taxon>Mollicutes</taxon>
        <taxon>Acholeplasmatales</taxon>
        <taxon>Acholeplasmataceae</taxon>
        <taxon>Acholeplasma</taxon>
    </lineage>
</organism>
<gene>
    <name evidence="4" type="primary">sqwD</name>
    <name evidence="6" type="ORF">C4537_06710</name>
</gene>
<feature type="chain" id="PRO_0000459082" description="Sulfoacetaldehyde dehydrogenase">
    <location>
        <begin position="1"/>
        <end position="484"/>
    </location>
</feature>
<feature type="active site" description="Nucleophile" evidence="2">
    <location>
        <position position="239"/>
    </location>
</feature>
<feature type="binding site" evidence="1">
    <location>
        <begin position="105"/>
        <end position="110"/>
    </location>
    <ligand>
        <name>NAD(+)</name>
        <dbReference type="ChEBI" id="CHEBI:57540"/>
    </ligand>
</feature>
<feature type="binding site" evidence="1">
    <location>
        <position position="188"/>
    </location>
    <ligand>
        <name>NAD(+)</name>
        <dbReference type="ChEBI" id="CHEBI:57540"/>
    </ligand>
</feature>
<feature type="binding site" evidence="1">
    <location>
        <position position="206"/>
    </location>
    <ligand>
        <name>NAD(+)</name>
        <dbReference type="ChEBI" id="CHEBI:57540"/>
    </ligand>
</feature>
<feature type="binding site" evidence="1">
    <location>
        <position position="332"/>
    </location>
    <ligand>
        <name>NAD(+)</name>
        <dbReference type="ChEBI" id="CHEBI:57540"/>
    </ligand>
</feature>
<feature type="binding site" evidence="1">
    <location>
        <position position="412"/>
    </location>
    <ligand>
        <name>NAD(+)</name>
        <dbReference type="ChEBI" id="CHEBI:57540"/>
    </ligand>
</feature>
<sequence>MILNYIKKAKAAQQAIDHYTQEEIDKVCIAVGWEVYNDENILKLATSAVEETGMGNIPDKVAKHKNKVLGVLKDLKDAKSVGLIEEDFDKKIKKYAKPVGVVGALTPVTNPTATPASNGITILKGKNAVIFAPHPKAKLSTKMAVDFMREGLRKVGAPLDLIQVIEEPSLELTGELMKQVNVVLATGGGPMVKAAYSSGTPAYGVGPGNSVQIIAEDCDVLDAAKKVFTSKSFDHATSCSSENSVIVHESIYDRFVGELIRLGSYFVKNERKVLEEYMWIQNAKGYRSINPAIIAQSAKTIADSAGIKVSEEIKVLLVEGASDIEKDFFSQEKLSPVLTVFTYREFEEGYKILERLTNNYGTGHSCGIHTFNQEYIEKIGSRMKTSRVMVNQAQAAGNGGAFFNGMPSTVSLGCGSWGGNITSENITFKHFINVTWVSEYFTPKRPSDEEIFGDYLREVKAWSSTSIRQKQSLVNIRSPHQRVS</sequence>
<protein>
    <recommendedName>
        <fullName evidence="4">Sulfoacetaldehyde dehydrogenase</fullName>
        <ecNumber evidence="3">1.2.1.-</ecNumber>
    </recommendedName>
    <alternativeName>
        <fullName evidence="4">CoA-acylating sulfoacetaldehyde dehydrogenase</fullName>
    </alternativeName>
    <alternativeName>
        <fullName evidence="4">NAD(+)-dependent acylating sulfoacetaldehyde dehydrogenase</fullName>
    </alternativeName>
</protein>
<dbReference type="EC" id="1.2.1.-" evidence="3"/>
<dbReference type="EMBL" id="QZKD01000037">
    <property type="protein sequence ID" value="RJX24475.1"/>
    <property type="molecule type" value="Genomic_DNA"/>
</dbReference>
<dbReference type="SMR" id="A0A3A6N9T6"/>
<dbReference type="Proteomes" id="UP000269641">
    <property type="component" value="Unassembled WGS sequence"/>
</dbReference>
<dbReference type="GO" id="GO:0016620">
    <property type="term" value="F:oxidoreductase activity, acting on the aldehyde or oxo group of donors, NAD or NADP as acceptor"/>
    <property type="evidence" value="ECO:0007669"/>
    <property type="project" value="InterPro"/>
</dbReference>
<dbReference type="CDD" id="cd07122">
    <property type="entry name" value="ALDH_F20_ACDH"/>
    <property type="match status" value="1"/>
</dbReference>
<dbReference type="Gene3D" id="3.40.605.10">
    <property type="entry name" value="Aldehyde Dehydrogenase, Chain A, domain 1"/>
    <property type="match status" value="1"/>
</dbReference>
<dbReference type="Gene3D" id="3.40.309.10">
    <property type="entry name" value="Aldehyde Dehydrogenase, Chain A, domain 2"/>
    <property type="match status" value="1"/>
</dbReference>
<dbReference type="InterPro" id="IPR016161">
    <property type="entry name" value="Ald_DH/histidinol_DH"/>
</dbReference>
<dbReference type="InterPro" id="IPR016163">
    <property type="entry name" value="Ald_DH_C"/>
</dbReference>
<dbReference type="InterPro" id="IPR016162">
    <property type="entry name" value="Ald_DH_N"/>
</dbReference>
<dbReference type="InterPro" id="IPR015590">
    <property type="entry name" value="Aldehyde_DH_dom"/>
</dbReference>
<dbReference type="PANTHER" id="PTHR11699">
    <property type="entry name" value="ALDEHYDE DEHYDROGENASE-RELATED"/>
    <property type="match status" value="1"/>
</dbReference>
<dbReference type="Pfam" id="PF00171">
    <property type="entry name" value="Aldedh"/>
    <property type="match status" value="1"/>
</dbReference>
<dbReference type="SUPFAM" id="SSF53720">
    <property type="entry name" value="ALDH-like"/>
    <property type="match status" value="1"/>
</dbReference>
<proteinExistence type="evidence at protein level"/>
<reference key="1">
    <citation type="journal article" date="2017" name="ISME J.">
        <title>Energy and carbon metabolisms in a deep terrestrial subsurface fluid microbial community.</title>
        <authorList>
            <person name="Momper L."/>
            <person name="Jungbluth S.P."/>
            <person name="Lee M.D."/>
            <person name="Amend J.P."/>
        </authorList>
    </citation>
    <scope>NUCLEOTIDE SEQUENCE [LARGE SCALE GENOMIC DNA]</scope>
    <source>
        <strain>SURF_22</strain>
    </source>
</reference>
<reference key="2">
    <citation type="journal article" date="2023" name="Appl. Environ. Microbiol.">
        <title>A variant of the sulfoglycolytic transketolase pathway for the degradation of sulfoquinovose into sulfoacetate.</title>
        <authorList>
            <person name="Chu R."/>
            <person name="Wei Y."/>
            <person name="Liu J."/>
            <person name="Li B."/>
            <person name="Zhang J."/>
            <person name="Zhou Y."/>
            <person name="Du Y."/>
            <person name="Zhang Y."/>
        </authorList>
    </citation>
    <scope>FUNCTION</scope>
    <scope>CATALYTIC ACTIVITY</scope>
    <scope>BIOPHYSICOCHEMICAL PROPERTIES</scope>
</reference>
<evidence type="ECO:0000250" key="1">
    <source>
        <dbReference type="UniProtKB" id="P0A9Q7"/>
    </source>
</evidence>
<evidence type="ECO:0000250" key="2">
    <source>
        <dbReference type="UniProtKB" id="Q9HTJ1"/>
    </source>
</evidence>
<evidence type="ECO:0000269" key="3">
    <source>
    </source>
</evidence>
<evidence type="ECO:0000303" key="4">
    <source>
    </source>
</evidence>
<evidence type="ECO:0000305" key="5"/>
<evidence type="ECO:0000312" key="6">
    <source>
        <dbReference type="EMBL" id="RJX24475.1"/>
    </source>
</evidence>